<name>OS9_KLULA</name>
<protein>
    <recommendedName>
        <fullName>Protein OS-9 homolog</fullName>
    </recommendedName>
</protein>
<sequence>MIFLPVTSVVFAISWIYSGVSAFNPYSSTPYSLKYVDEQEFLSVIDNETLLQEGRLFRPYEGSDVLCYQRNTSSLIQHHEEDTFNSEGALIEAVNMVNAILAPNPIEMNTVPISYWTYIISSGETRTVVQKGYFGETYLLGNSSNYNSTIDYHFAKSKTGRVYLSETLVDGCTCDLTHKPREVEIQYICPKRPLSRPFHLEVREIQSCKYQLRLFLPQLCELSSFNPLLGQLSEHNIICHRSGSKLSPALDIFNRYSATVLDHGIYLLKPKNSAKDRRQLMYHAAEPLDSQTTLFELTVEERFIGDFISSLKKLIGSDFIQSPTGKSIKPGDLFLWRAPVVDETGNLLFLIDLELNSASEAIGKVNNDASLLNELPIHNMVYFDSMTVNQTDETSSNSLPEKSTGLVPDIFATDEIESPYKGGTAQELKDKLMEAFRDIGYPDIEVEILEEVVEEQN</sequence>
<reference key="1">
    <citation type="journal article" date="2004" name="Nature">
        <title>Genome evolution in yeasts.</title>
        <authorList>
            <person name="Dujon B."/>
            <person name="Sherman D."/>
            <person name="Fischer G."/>
            <person name="Durrens P."/>
            <person name="Casaregola S."/>
            <person name="Lafontaine I."/>
            <person name="de Montigny J."/>
            <person name="Marck C."/>
            <person name="Neuveglise C."/>
            <person name="Talla E."/>
            <person name="Goffard N."/>
            <person name="Frangeul L."/>
            <person name="Aigle M."/>
            <person name="Anthouard V."/>
            <person name="Babour A."/>
            <person name="Barbe V."/>
            <person name="Barnay S."/>
            <person name="Blanchin S."/>
            <person name="Beckerich J.-M."/>
            <person name="Beyne E."/>
            <person name="Bleykasten C."/>
            <person name="Boisrame A."/>
            <person name="Boyer J."/>
            <person name="Cattolico L."/>
            <person name="Confanioleri F."/>
            <person name="de Daruvar A."/>
            <person name="Despons L."/>
            <person name="Fabre E."/>
            <person name="Fairhead C."/>
            <person name="Ferry-Dumazet H."/>
            <person name="Groppi A."/>
            <person name="Hantraye F."/>
            <person name="Hennequin C."/>
            <person name="Jauniaux N."/>
            <person name="Joyet P."/>
            <person name="Kachouri R."/>
            <person name="Kerrest A."/>
            <person name="Koszul R."/>
            <person name="Lemaire M."/>
            <person name="Lesur I."/>
            <person name="Ma L."/>
            <person name="Muller H."/>
            <person name="Nicaud J.-M."/>
            <person name="Nikolski M."/>
            <person name="Oztas S."/>
            <person name="Ozier-Kalogeropoulos O."/>
            <person name="Pellenz S."/>
            <person name="Potier S."/>
            <person name="Richard G.-F."/>
            <person name="Straub M.-L."/>
            <person name="Suleau A."/>
            <person name="Swennen D."/>
            <person name="Tekaia F."/>
            <person name="Wesolowski-Louvel M."/>
            <person name="Westhof E."/>
            <person name="Wirth B."/>
            <person name="Zeniou-Meyer M."/>
            <person name="Zivanovic Y."/>
            <person name="Bolotin-Fukuhara M."/>
            <person name="Thierry A."/>
            <person name="Bouchier C."/>
            <person name="Caudron B."/>
            <person name="Scarpelli C."/>
            <person name="Gaillardin C."/>
            <person name="Weissenbach J."/>
            <person name="Wincker P."/>
            <person name="Souciet J.-L."/>
        </authorList>
    </citation>
    <scope>NUCLEOTIDE SEQUENCE [LARGE SCALE GENOMIC DNA]</scope>
    <source>
        <strain>ATCC 8585 / CBS 2359 / DSM 70799 / NBRC 1267 / NRRL Y-1140 / WM37</strain>
    </source>
</reference>
<comment type="function">
    <text evidence="1">Lectin involved in the quality control of the secretory pathway. As a member of the endoplasmic reticulum-associated degradation lumenal (ERAD-L) surveillance system, targets misfolded endoplasmic reticulum lumenal glycoproteins for degradation (By similarity).</text>
</comment>
<comment type="subunit">
    <text evidence="1">Interacts with missfolded ER lumenal proteins.</text>
</comment>
<comment type="subcellular location">
    <subcellularLocation>
        <location evidence="1">Endoplasmic reticulum membrane</location>
        <topology evidence="1">Peripheral membrane protein</topology>
        <orientation evidence="1">Lumenal side</orientation>
    </subcellularLocation>
</comment>
<comment type="similarity">
    <text evidence="5">Belongs to the OS-9 family.</text>
</comment>
<gene>
    <name type="primary">YOS9</name>
    <name type="ordered locus">KLLA0E12639g</name>
</gene>
<keyword id="KW-1015">Disulfide bond</keyword>
<keyword id="KW-0256">Endoplasmic reticulum</keyword>
<keyword id="KW-0325">Glycoprotein</keyword>
<keyword id="KW-0430">Lectin</keyword>
<keyword id="KW-0472">Membrane</keyword>
<keyword id="KW-1185">Reference proteome</keyword>
<keyword id="KW-0732">Signal</keyword>
<evidence type="ECO:0000250" key="1"/>
<evidence type="ECO:0000250" key="2">
    <source>
        <dbReference type="UniProtKB" id="Q13438"/>
    </source>
</evidence>
<evidence type="ECO:0000255" key="3"/>
<evidence type="ECO:0000255" key="4">
    <source>
        <dbReference type="PROSITE-ProRule" id="PRU01262"/>
    </source>
</evidence>
<evidence type="ECO:0000305" key="5"/>
<feature type="signal peptide" evidence="3">
    <location>
        <begin position="1"/>
        <end position="22"/>
    </location>
</feature>
<feature type="chain" id="PRO_0000043272" description="Protein OS-9 homolog">
    <location>
        <begin position="23"/>
        <end position="457"/>
    </location>
</feature>
<feature type="domain" description="MRH" evidence="4">
    <location>
        <begin position="104"/>
        <end position="222"/>
    </location>
</feature>
<feature type="binding site" evidence="2">
    <location>
        <position position="116"/>
    </location>
    <ligand>
        <name>a mannooligosaccharide derivative</name>
        <dbReference type="ChEBI" id="CHEBI:71274"/>
    </ligand>
</feature>
<feature type="binding site" evidence="2">
    <location>
        <position position="175"/>
    </location>
    <ligand>
        <name>a mannooligosaccharide derivative</name>
        <dbReference type="ChEBI" id="CHEBI:71274"/>
    </ligand>
</feature>
<feature type="binding site" evidence="2">
    <location>
        <position position="181"/>
    </location>
    <ligand>
        <name>a mannooligosaccharide derivative</name>
        <dbReference type="ChEBI" id="CHEBI:71274"/>
    </ligand>
</feature>
<feature type="binding site" evidence="2">
    <location>
        <position position="204"/>
    </location>
    <ligand>
        <name>a mannooligosaccharide derivative</name>
        <dbReference type="ChEBI" id="CHEBI:71274"/>
    </ligand>
</feature>
<feature type="binding site" evidence="2">
    <location>
        <position position="210"/>
    </location>
    <ligand>
        <name>a mannooligosaccharide derivative</name>
        <dbReference type="ChEBI" id="CHEBI:71274"/>
    </ligand>
</feature>
<feature type="glycosylation site" description="N-linked (GlcNAc...) asparagine" evidence="3">
    <location>
        <position position="47"/>
    </location>
</feature>
<feature type="glycosylation site" description="N-linked (GlcNAc...) asparagine" evidence="3">
    <location>
        <position position="71"/>
    </location>
</feature>
<feature type="glycosylation site" description="N-linked (GlcNAc...) asparagine" evidence="3">
    <location>
        <position position="142"/>
    </location>
</feature>
<feature type="glycosylation site" description="N-linked (GlcNAc...) asparagine" evidence="3">
    <location>
        <position position="147"/>
    </location>
</feature>
<feature type="glycosylation site" description="N-linked (GlcNAc...) asparagine" evidence="3">
    <location>
        <position position="389"/>
    </location>
</feature>
<feature type="disulfide bond" evidence="4">
    <location>
        <begin position="174"/>
        <end position="208"/>
    </location>
</feature>
<feature type="disulfide bond" evidence="4">
    <location>
        <begin position="189"/>
        <end position="220"/>
    </location>
</feature>
<organism>
    <name type="scientific">Kluyveromyces lactis (strain ATCC 8585 / CBS 2359 / DSM 70799 / NBRC 1267 / NRRL Y-1140 / WM37)</name>
    <name type="common">Yeast</name>
    <name type="synonym">Candida sphaerica</name>
    <dbReference type="NCBI Taxonomy" id="284590"/>
    <lineage>
        <taxon>Eukaryota</taxon>
        <taxon>Fungi</taxon>
        <taxon>Dikarya</taxon>
        <taxon>Ascomycota</taxon>
        <taxon>Saccharomycotina</taxon>
        <taxon>Saccharomycetes</taxon>
        <taxon>Saccharomycetales</taxon>
        <taxon>Saccharomycetaceae</taxon>
        <taxon>Kluyveromyces</taxon>
    </lineage>
</organism>
<proteinExistence type="inferred from homology"/>
<dbReference type="EMBL" id="CR382125">
    <property type="protein sequence ID" value="CAG99605.1"/>
    <property type="molecule type" value="Genomic_DNA"/>
</dbReference>
<dbReference type="RefSeq" id="XP_454518.1">
    <property type="nucleotide sequence ID" value="XM_454518.1"/>
</dbReference>
<dbReference type="FunCoup" id="Q6CNH1">
    <property type="interactions" value="100"/>
</dbReference>
<dbReference type="STRING" id="284590.Q6CNH1"/>
<dbReference type="GlyCosmos" id="Q6CNH1">
    <property type="glycosylation" value="5 sites, No reported glycans"/>
</dbReference>
<dbReference type="PaxDb" id="284590-Q6CNH1"/>
<dbReference type="KEGG" id="kla:KLLA0_E12607g"/>
<dbReference type="eggNOG" id="KOG3394">
    <property type="taxonomic scope" value="Eukaryota"/>
</dbReference>
<dbReference type="HOGENOM" id="CLU_598594_0_0_1"/>
<dbReference type="InParanoid" id="Q6CNH1"/>
<dbReference type="Proteomes" id="UP000000598">
    <property type="component" value="Chromosome E"/>
</dbReference>
<dbReference type="GO" id="GO:0005788">
    <property type="term" value="C:endoplasmic reticulum lumen"/>
    <property type="evidence" value="ECO:0007669"/>
    <property type="project" value="TreeGrafter"/>
</dbReference>
<dbReference type="GO" id="GO:0005789">
    <property type="term" value="C:endoplasmic reticulum membrane"/>
    <property type="evidence" value="ECO:0007669"/>
    <property type="project" value="UniProtKB-SubCell"/>
</dbReference>
<dbReference type="GO" id="GO:0030246">
    <property type="term" value="F:carbohydrate binding"/>
    <property type="evidence" value="ECO:0007669"/>
    <property type="project" value="UniProtKB-KW"/>
</dbReference>
<dbReference type="GO" id="GO:0030968">
    <property type="term" value="P:endoplasmic reticulum unfolded protein response"/>
    <property type="evidence" value="ECO:0007669"/>
    <property type="project" value="InterPro"/>
</dbReference>
<dbReference type="GO" id="GO:0030970">
    <property type="term" value="P:retrograde protein transport, ER to cytosol"/>
    <property type="evidence" value="ECO:0007669"/>
    <property type="project" value="TreeGrafter"/>
</dbReference>
<dbReference type="CDD" id="cd11745">
    <property type="entry name" value="Yos9_DD"/>
    <property type="match status" value="1"/>
</dbReference>
<dbReference type="Gene3D" id="3.10.310.60">
    <property type="match status" value="1"/>
</dbReference>
<dbReference type="Gene3D" id="2.70.130.10">
    <property type="entry name" value="Mannose-6-phosphate receptor binding domain"/>
    <property type="match status" value="1"/>
</dbReference>
<dbReference type="InterPro" id="IPR009011">
    <property type="entry name" value="Man6P_isomerase_rcpt-bd_dom_sf"/>
</dbReference>
<dbReference type="InterPro" id="IPR044865">
    <property type="entry name" value="MRH_dom"/>
</dbReference>
<dbReference type="InterPro" id="IPR045149">
    <property type="entry name" value="OS-9-like"/>
</dbReference>
<dbReference type="InterPro" id="IPR041039">
    <property type="entry name" value="Yos9_DD"/>
</dbReference>
<dbReference type="PANTHER" id="PTHR15414:SF0">
    <property type="entry name" value="ENDOPLASMIC RETICULUM LECTIN 1"/>
    <property type="match status" value="1"/>
</dbReference>
<dbReference type="PANTHER" id="PTHR15414">
    <property type="entry name" value="OS-9-RELATED"/>
    <property type="match status" value="1"/>
</dbReference>
<dbReference type="Pfam" id="PF17880">
    <property type="entry name" value="Yos9_DD"/>
    <property type="match status" value="1"/>
</dbReference>
<dbReference type="PROSITE" id="PS51914">
    <property type="entry name" value="MRH"/>
    <property type="match status" value="1"/>
</dbReference>
<accession>Q6CNH1</accession>